<protein>
    <recommendedName>
        <fullName evidence="1">Small ribosomal subunit protein bS18</fullName>
    </recommendedName>
    <alternativeName>
        <fullName evidence="2">30S ribosomal protein S18</fullName>
    </alternativeName>
</protein>
<accession>B5ZC59</accession>
<reference key="1">
    <citation type="submission" date="2008-10" db="EMBL/GenBank/DDBJ databases">
        <title>Genome sequence of Ureaplasma urealyticum serovar 10 ATCC-33699.</title>
        <authorList>
            <person name="Shrivastava S."/>
            <person name="Methe B.A."/>
            <person name="Glass J."/>
            <person name="White K."/>
            <person name="Duffy L.B."/>
        </authorList>
    </citation>
    <scope>NUCLEOTIDE SEQUENCE [LARGE SCALE GENOMIC DNA]</scope>
    <source>
        <strain>ATCC 33699 / Western</strain>
    </source>
</reference>
<evidence type="ECO:0000255" key="1">
    <source>
        <dbReference type="HAMAP-Rule" id="MF_00270"/>
    </source>
</evidence>
<evidence type="ECO:0000305" key="2"/>
<feature type="chain" id="PRO_1000114464" description="Small ribosomal subunit protein bS18">
    <location>
        <begin position="1"/>
        <end position="79"/>
    </location>
</feature>
<organism>
    <name type="scientific">Ureaplasma urealyticum serovar 10 (strain ATCC 33699 / Western)</name>
    <dbReference type="NCBI Taxonomy" id="565575"/>
    <lineage>
        <taxon>Bacteria</taxon>
        <taxon>Bacillati</taxon>
        <taxon>Mycoplasmatota</taxon>
        <taxon>Mycoplasmoidales</taxon>
        <taxon>Mycoplasmoidaceae</taxon>
        <taxon>Ureaplasma</taxon>
    </lineage>
</organism>
<sequence>MAKVINNRNRKPRKKVCILSAKGIEHVDYKDVELLQRFINNNNKIASRRVTGASARMQRRIANAIKRARFVGLLPYVKE</sequence>
<name>RS18_UREU1</name>
<comment type="function">
    <text evidence="1">Binds as a heterodimer with protein bS6 to the central domain of the 16S rRNA, where it helps stabilize the platform of the 30S subunit.</text>
</comment>
<comment type="subunit">
    <text evidence="1">Part of the 30S ribosomal subunit. Forms a tight heterodimer with protein bS6.</text>
</comment>
<comment type="similarity">
    <text evidence="1">Belongs to the bacterial ribosomal protein bS18 family.</text>
</comment>
<gene>
    <name evidence="1" type="primary">rpsR</name>
    <name type="ordered locus">UUR10_0643</name>
</gene>
<proteinExistence type="inferred from homology"/>
<keyword id="KW-0687">Ribonucleoprotein</keyword>
<keyword id="KW-0689">Ribosomal protein</keyword>
<keyword id="KW-0694">RNA-binding</keyword>
<keyword id="KW-0699">rRNA-binding</keyword>
<dbReference type="EMBL" id="CP001184">
    <property type="protein sequence ID" value="ACI60336.1"/>
    <property type="molecule type" value="Genomic_DNA"/>
</dbReference>
<dbReference type="RefSeq" id="WP_004025615.1">
    <property type="nucleotide sequence ID" value="NC_011374.1"/>
</dbReference>
<dbReference type="SMR" id="B5ZC59"/>
<dbReference type="STRING" id="565575.UUR10_0643"/>
<dbReference type="GeneID" id="93849099"/>
<dbReference type="KEGG" id="uue:UUR10_0643"/>
<dbReference type="eggNOG" id="COG0238">
    <property type="taxonomic scope" value="Bacteria"/>
</dbReference>
<dbReference type="HOGENOM" id="CLU_148710_2_2_14"/>
<dbReference type="OrthoDB" id="9812008at2"/>
<dbReference type="Proteomes" id="UP000002018">
    <property type="component" value="Chromosome"/>
</dbReference>
<dbReference type="GO" id="GO:0022627">
    <property type="term" value="C:cytosolic small ribosomal subunit"/>
    <property type="evidence" value="ECO:0007669"/>
    <property type="project" value="TreeGrafter"/>
</dbReference>
<dbReference type="GO" id="GO:0070181">
    <property type="term" value="F:small ribosomal subunit rRNA binding"/>
    <property type="evidence" value="ECO:0007669"/>
    <property type="project" value="TreeGrafter"/>
</dbReference>
<dbReference type="GO" id="GO:0003735">
    <property type="term" value="F:structural constituent of ribosome"/>
    <property type="evidence" value="ECO:0007669"/>
    <property type="project" value="InterPro"/>
</dbReference>
<dbReference type="GO" id="GO:0006412">
    <property type="term" value="P:translation"/>
    <property type="evidence" value="ECO:0007669"/>
    <property type="project" value="UniProtKB-UniRule"/>
</dbReference>
<dbReference type="Gene3D" id="4.10.640.10">
    <property type="entry name" value="Ribosomal protein S18"/>
    <property type="match status" value="1"/>
</dbReference>
<dbReference type="HAMAP" id="MF_00270">
    <property type="entry name" value="Ribosomal_bS18"/>
    <property type="match status" value="1"/>
</dbReference>
<dbReference type="InterPro" id="IPR001648">
    <property type="entry name" value="Ribosomal_bS18"/>
</dbReference>
<dbReference type="InterPro" id="IPR036870">
    <property type="entry name" value="Ribosomal_bS18_sf"/>
</dbReference>
<dbReference type="NCBIfam" id="TIGR00165">
    <property type="entry name" value="S18"/>
    <property type="match status" value="1"/>
</dbReference>
<dbReference type="PANTHER" id="PTHR13479">
    <property type="entry name" value="30S RIBOSOMAL PROTEIN S18"/>
    <property type="match status" value="1"/>
</dbReference>
<dbReference type="PANTHER" id="PTHR13479:SF40">
    <property type="entry name" value="SMALL RIBOSOMAL SUBUNIT PROTEIN BS18M"/>
    <property type="match status" value="1"/>
</dbReference>
<dbReference type="Pfam" id="PF01084">
    <property type="entry name" value="Ribosomal_S18"/>
    <property type="match status" value="1"/>
</dbReference>
<dbReference type="PRINTS" id="PR00974">
    <property type="entry name" value="RIBOSOMALS18"/>
</dbReference>
<dbReference type="SUPFAM" id="SSF46911">
    <property type="entry name" value="Ribosomal protein S18"/>
    <property type="match status" value="1"/>
</dbReference>